<comment type="function">
    <text evidence="1">Structural component of the T=16 icosahedral capsid. The capsid is composed of pentamers and hexamers of major capsid protein/MCP, which are linked together by heterotrimers called triplexes. These triplexes are formed by a single molecule of triplex protein 1/TRX1 and two copies of triplex protein 2/TRX2. Additionally, TRX1 is required for efficient transport of TRX2 to the nucleus, which is the site of capsid assembly.</text>
</comment>
<comment type="subunit">
    <text evidence="1">Interacts with TRX2, MCP and capsid vertex component 2/CVC2.</text>
</comment>
<comment type="subcellular location">
    <subcellularLocation>
        <location evidence="1">Virion</location>
    </subcellularLocation>
    <subcellularLocation>
        <location evidence="1">Host nucleus</location>
    </subcellularLocation>
</comment>
<comment type="similarity">
    <text evidence="1">Belongs to the herpesviridae TRX1 protein family.</text>
</comment>
<accession>P0DTP3</accession>
<accession>Q77PV0</accession>
<accession>Q9WT35</accession>
<sequence length="299" mass="34127">MNSKSSARAAIVDTVEAVKKRKYISIEAGTLNNVVEKERKFLKQFLSGRENLRIAARVFTPCELLAPELENLGMLMYRFETDVDNPKILFVGLFFLCSNAFNVSACVRTALTTMYTNSMVDNVLSMINTCKYLEDKVSLFGVTSLVSCGSSCLLSCVMQGNVYDANKENIHGLTVLKEIFLEPDWEPRQHSTQYVYVVHVYKEVLSKLQYGIYVVLTSFQNEDLVVDILRQYFEKERFLFLNYLINSNTTLSYFGSVQRIGRCATEDIKSGFLQYRGITLPVIKLENIFVDLSEKKVFV</sequence>
<proteinExistence type="evidence at protein level"/>
<keyword id="KW-0002">3D-structure</keyword>
<keyword id="KW-0167">Capsid protein</keyword>
<keyword id="KW-1048">Host nucleus</keyword>
<keyword id="KW-1185">Reference proteome</keyword>
<keyword id="KW-0946">Virion</keyword>
<gene>
    <name evidence="1" type="primary">TRX1</name>
    <name type="ordered locus">U29</name>
</gene>
<organismHost>
    <name type="scientific">Homo sapiens</name>
    <name type="common">Human</name>
    <dbReference type="NCBI Taxonomy" id="9606"/>
</organismHost>
<feature type="chain" id="PRO_0000408447" description="Triplex capsid protein 1">
    <location>
        <begin position="1"/>
        <end position="299"/>
    </location>
</feature>
<evidence type="ECO:0000255" key="1">
    <source>
        <dbReference type="HAMAP-Rule" id="MF_04018"/>
    </source>
</evidence>
<evidence type="ECO:0007744" key="2">
    <source>
        <dbReference type="PDB" id="6Q1F"/>
    </source>
</evidence>
<organism>
    <name type="scientific">Human herpesvirus 6B (strain Z29)</name>
    <name type="common">HHV-6 variant B</name>
    <name type="synonym">Human B lymphotropic virus</name>
    <dbReference type="NCBI Taxonomy" id="36351"/>
    <lineage>
        <taxon>Viruses</taxon>
        <taxon>Duplodnaviria</taxon>
        <taxon>Heunggongvirae</taxon>
        <taxon>Peploviricota</taxon>
        <taxon>Herviviricetes</taxon>
        <taxon>Herpesvirales</taxon>
        <taxon>Orthoherpesviridae</taxon>
        <taxon>Betaherpesvirinae</taxon>
        <taxon>Roseolovirus</taxon>
        <taxon>Roseolovirus humanbeta6b</taxon>
        <taxon>Human herpesvirus 6B</taxon>
    </lineage>
</organism>
<reference key="1">
    <citation type="journal article" date="1999" name="J. Virol.">
        <title>Human herpesvirus 6B genome sequence: coding content and comparison with human herpesvirus 6A.</title>
        <authorList>
            <person name="Dominguez G."/>
            <person name="Dambaugh T.R."/>
            <person name="Stamey F.R."/>
            <person name="Dewhurst S."/>
            <person name="Inoue N."/>
            <person name="Pellett P.E."/>
        </authorList>
    </citation>
    <scope>NUCLEOTIDE SEQUENCE [LARGE SCALE GENOMIC DNA]</scope>
</reference>
<reference evidence="2" key="2">
    <citation type="journal article" date="2019" name="Nat. Commun.">
        <title>Atomic structure of the human herpesvirus 6B capsid and capsid-associated tegument complexes.</title>
        <authorList>
            <person name="Zhang Y."/>
            <person name="Liu W."/>
            <person name="Li Z."/>
            <person name="Kumar V."/>
            <person name="Alvarez-Cabrera A.L."/>
            <person name="Leibovitch E.C."/>
            <person name="Cui Y."/>
            <person name="Mei Y."/>
            <person name="Bi G.Q."/>
            <person name="Jacobson S."/>
            <person name="Zhou Z.H."/>
        </authorList>
    </citation>
    <scope>STRUCTURE BY ELECTRON MICROSCOPY (9.00 ANGSTROMS)</scope>
</reference>
<dbReference type="EMBL" id="AF157706">
    <property type="protein sequence ID" value="AAD49643.1"/>
    <property type="molecule type" value="Genomic_DNA"/>
</dbReference>
<dbReference type="PIR" id="T43989">
    <property type="entry name" value="T43989"/>
</dbReference>
<dbReference type="RefSeq" id="NP_050210.1">
    <property type="nucleotide sequence ID" value="NC_000898.1"/>
</dbReference>
<dbReference type="PDB" id="6Q1F">
    <property type="method" value="EM"/>
    <property type="resolution" value="9.00 A"/>
    <property type="chains" value="5/S/T/U/V=1-299"/>
</dbReference>
<dbReference type="PDBsum" id="6Q1F"/>
<dbReference type="SMR" id="P0DTP3"/>
<dbReference type="GeneID" id="1497031"/>
<dbReference type="KEGG" id="vg:1497031"/>
<dbReference type="Proteomes" id="UP000006930">
    <property type="component" value="Segment"/>
</dbReference>
<dbReference type="GO" id="GO:0042025">
    <property type="term" value="C:host cell nucleus"/>
    <property type="evidence" value="ECO:0007669"/>
    <property type="project" value="UniProtKB-SubCell"/>
</dbReference>
<dbReference type="GO" id="GO:0019028">
    <property type="term" value="C:viral capsid"/>
    <property type="evidence" value="ECO:0007669"/>
    <property type="project" value="UniProtKB-KW"/>
</dbReference>
<dbReference type="GO" id="GO:0003677">
    <property type="term" value="F:DNA binding"/>
    <property type="evidence" value="ECO:0007669"/>
    <property type="project" value="InterPro"/>
</dbReference>
<dbReference type="GO" id="GO:0019069">
    <property type="term" value="P:viral capsid assembly"/>
    <property type="evidence" value="ECO:0007669"/>
    <property type="project" value="InterPro"/>
</dbReference>
<dbReference type="HAMAP" id="MF_04018">
    <property type="entry name" value="HSV_TRX1"/>
    <property type="match status" value="1"/>
</dbReference>
<dbReference type="InterPro" id="IPR004999">
    <property type="entry name" value="Herpes_1"/>
</dbReference>
<dbReference type="Pfam" id="PF03327">
    <property type="entry name" value="Herpes_VP19C"/>
    <property type="match status" value="1"/>
</dbReference>
<name>TRX1_HHV6Z</name>
<protein>
    <recommendedName>
        <fullName evidence="1">Triplex capsid protein 1</fullName>
    </recommendedName>
</protein>